<gene>
    <name evidence="1" type="primary">rplW</name>
    <name type="ordered locus">BA_0112</name>
    <name type="ordered locus">GBAA_0112</name>
    <name type="ordered locus">BAS0112</name>
</gene>
<reference key="1">
    <citation type="journal article" date="2003" name="Nature">
        <title>The genome sequence of Bacillus anthracis Ames and comparison to closely related bacteria.</title>
        <authorList>
            <person name="Read T.D."/>
            <person name="Peterson S.N."/>
            <person name="Tourasse N.J."/>
            <person name="Baillie L.W."/>
            <person name="Paulsen I.T."/>
            <person name="Nelson K.E."/>
            <person name="Tettelin H."/>
            <person name="Fouts D.E."/>
            <person name="Eisen J.A."/>
            <person name="Gill S.R."/>
            <person name="Holtzapple E.K."/>
            <person name="Okstad O.A."/>
            <person name="Helgason E."/>
            <person name="Rilstone J."/>
            <person name="Wu M."/>
            <person name="Kolonay J.F."/>
            <person name="Beanan M.J."/>
            <person name="Dodson R.J."/>
            <person name="Brinkac L.M."/>
            <person name="Gwinn M.L."/>
            <person name="DeBoy R.T."/>
            <person name="Madpu R."/>
            <person name="Daugherty S.C."/>
            <person name="Durkin A.S."/>
            <person name="Haft D.H."/>
            <person name="Nelson W.C."/>
            <person name="Peterson J.D."/>
            <person name="Pop M."/>
            <person name="Khouri H.M."/>
            <person name="Radune D."/>
            <person name="Benton J.L."/>
            <person name="Mahamoud Y."/>
            <person name="Jiang L."/>
            <person name="Hance I.R."/>
            <person name="Weidman J.F."/>
            <person name="Berry K.J."/>
            <person name="Plaut R.D."/>
            <person name="Wolf A.M."/>
            <person name="Watkins K.L."/>
            <person name="Nierman W.C."/>
            <person name="Hazen A."/>
            <person name="Cline R.T."/>
            <person name="Redmond C."/>
            <person name="Thwaite J.E."/>
            <person name="White O."/>
            <person name="Salzberg S.L."/>
            <person name="Thomason B."/>
            <person name="Friedlander A.M."/>
            <person name="Koehler T.M."/>
            <person name="Hanna P.C."/>
            <person name="Kolstoe A.-B."/>
            <person name="Fraser C.M."/>
        </authorList>
    </citation>
    <scope>NUCLEOTIDE SEQUENCE [LARGE SCALE GENOMIC DNA]</scope>
    <source>
        <strain>Ames / isolate Porton</strain>
    </source>
</reference>
<reference key="2">
    <citation type="submission" date="2004-01" db="EMBL/GenBank/DDBJ databases">
        <title>Complete genome sequence of Bacillus anthracis Sterne.</title>
        <authorList>
            <person name="Brettin T.S."/>
            <person name="Bruce D."/>
            <person name="Challacombe J.F."/>
            <person name="Gilna P."/>
            <person name="Han C."/>
            <person name="Hill K."/>
            <person name="Hitchcock P."/>
            <person name="Jackson P."/>
            <person name="Keim P."/>
            <person name="Longmire J."/>
            <person name="Lucas S."/>
            <person name="Okinaka R."/>
            <person name="Richardson P."/>
            <person name="Rubin E."/>
            <person name="Tice H."/>
        </authorList>
    </citation>
    <scope>NUCLEOTIDE SEQUENCE [LARGE SCALE GENOMIC DNA]</scope>
    <source>
        <strain>Sterne</strain>
    </source>
</reference>
<reference key="3">
    <citation type="journal article" date="2009" name="J. Bacteriol.">
        <title>The complete genome sequence of Bacillus anthracis Ames 'Ancestor'.</title>
        <authorList>
            <person name="Ravel J."/>
            <person name="Jiang L."/>
            <person name="Stanley S.T."/>
            <person name="Wilson M.R."/>
            <person name="Decker R.S."/>
            <person name="Read T.D."/>
            <person name="Worsham P."/>
            <person name="Keim P.S."/>
            <person name="Salzberg S.L."/>
            <person name="Fraser-Liggett C.M."/>
            <person name="Rasko D.A."/>
        </authorList>
    </citation>
    <scope>NUCLEOTIDE SEQUENCE [LARGE SCALE GENOMIC DNA]</scope>
    <source>
        <strain>Ames ancestor</strain>
    </source>
</reference>
<protein>
    <recommendedName>
        <fullName evidence="1">Large ribosomal subunit protein uL23</fullName>
    </recommendedName>
    <alternativeName>
        <fullName evidence="2">50S ribosomal protein L23</fullName>
    </alternativeName>
</protein>
<sequence>MRDPRDIIKRPVITERSMEMMAEKKYTFDVDVKSNKTEVKDALEAIFGVKVEKVNIMNYKPKAKRVGRHAGFTSRRRKAIVKLTADSKEIEIFQGV</sequence>
<comment type="function">
    <text evidence="1">One of the early assembly proteins it binds 23S rRNA. One of the proteins that surrounds the polypeptide exit tunnel on the outside of the ribosome. Forms the main docking site for trigger factor binding to the ribosome.</text>
</comment>
<comment type="subunit">
    <text evidence="1">Part of the 50S ribosomal subunit. Contacts protein L29, and trigger factor when it is bound to the ribosome.</text>
</comment>
<comment type="similarity">
    <text evidence="1">Belongs to the universal ribosomal protein uL23 family.</text>
</comment>
<proteinExistence type="inferred from homology"/>
<feature type="chain" id="PRO_0000272697" description="Large ribosomal subunit protein uL23">
    <location>
        <begin position="1"/>
        <end position="96"/>
    </location>
</feature>
<keyword id="KW-1185">Reference proteome</keyword>
<keyword id="KW-0687">Ribonucleoprotein</keyword>
<keyword id="KW-0689">Ribosomal protein</keyword>
<keyword id="KW-0694">RNA-binding</keyword>
<keyword id="KW-0699">rRNA-binding</keyword>
<accession>Q81VS8</accession>
<accession>Q6I4T2</accession>
<accession>Q6KYH8</accession>
<name>RL23_BACAN</name>
<evidence type="ECO:0000255" key="1">
    <source>
        <dbReference type="HAMAP-Rule" id="MF_01369"/>
    </source>
</evidence>
<evidence type="ECO:0000305" key="2"/>
<organism>
    <name type="scientific">Bacillus anthracis</name>
    <dbReference type="NCBI Taxonomy" id="1392"/>
    <lineage>
        <taxon>Bacteria</taxon>
        <taxon>Bacillati</taxon>
        <taxon>Bacillota</taxon>
        <taxon>Bacilli</taxon>
        <taxon>Bacillales</taxon>
        <taxon>Bacillaceae</taxon>
        <taxon>Bacillus</taxon>
        <taxon>Bacillus cereus group</taxon>
    </lineage>
</organism>
<dbReference type="EMBL" id="AE016879">
    <property type="protein sequence ID" value="AAP24166.1"/>
    <property type="molecule type" value="Genomic_DNA"/>
</dbReference>
<dbReference type="EMBL" id="AE017225">
    <property type="protein sequence ID" value="AAT52449.1"/>
    <property type="molecule type" value="Genomic_DNA"/>
</dbReference>
<dbReference type="EMBL" id="AE017334">
    <property type="protein sequence ID" value="AAT29192.1"/>
    <property type="molecule type" value="Genomic_DNA"/>
</dbReference>
<dbReference type="RefSeq" id="NP_842680.1">
    <property type="nucleotide sequence ID" value="NC_003997.3"/>
</dbReference>
<dbReference type="RefSeq" id="WP_001205558.1">
    <property type="nucleotide sequence ID" value="NZ_WXXJ01000051.1"/>
</dbReference>
<dbReference type="RefSeq" id="YP_026398.1">
    <property type="nucleotide sequence ID" value="NC_005945.1"/>
</dbReference>
<dbReference type="SMR" id="Q81VS8"/>
<dbReference type="STRING" id="261594.GBAA_0112"/>
<dbReference type="DNASU" id="1086274"/>
<dbReference type="GeneID" id="93010941"/>
<dbReference type="KEGG" id="ban:BA_0112"/>
<dbReference type="KEGG" id="bar:GBAA_0112"/>
<dbReference type="KEGG" id="bat:BAS0112"/>
<dbReference type="PATRIC" id="fig|198094.11.peg.109"/>
<dbReference type="eggNOG" id="COG0089">
    <property type="taxonomic scope" value="Bacteria"/>
</dbReference>
<dbReference type="HOGENOM" id="CLU_037562_3_2_9"/>
<dbReference type="OMA" id="DHRAAKP"/>
<dbReference type="OrthoDB" id="9793353at2"/>
<dbReference type="Proteomes" id="UP000000427">
    <property type="component" value="Chromosome"/>
</dbReference>
<dbReference type="Proteomes" id="UP000000594">
    <property type="component" value="Chromosome"/>
</dbReference>
<dbReference type="GO" id="GO:1990904">
    <property type="term" value="C:ribonucleoprotein complex"/>
    <property type="evidence" value="ECO:0007669"/>
    <property type="project" value="UniProtKB-KW"/>
</dbReference>
<dbReference type="GO" id="GO:0005840">
    <property type="term" value="C:ribosome"/>
    <property type="evidence" value="ECO:0007669"/>
    <property type="project" value="UniProtKB-KW"/>
</dbReference>
<dbReference type="GO" id="GO:0019843">
    <property type="term" value="F:rRNA binding"/>
    <property type="evidence" value="ECO:0007669"/>
    <property type="project" value="UniProtKB-UniRule"/>
</dbReference>
<dbReference type="GO" id="GO:0003735">
    <property type="term" value="F:structural constituent of ribosome"/>
    <property type="evidence" value="ECO:0007669"/>
    <property type="project" value="InterPro"/>
</dbReference>
<dbReference type="GO" id="GO:0006412">
    <property type="term" value="P:translation"/>
    <property type="evidence" value="ECO:0007669"/>
    <property type="project" value="UniProtKB-UniRule"/>
</dbReference>
<dbReference type="FunFam" id="3.30.70.330:FF:000001">
    <property type="entry name" value="50S ribosomal protein L23"/>
    <property type="match status" value="1"/>
</dbReference>
<dbReference type="Gene3D" id="3.30.70.330">
    <property type="match status" value="1"/>
</dbReference>
<dbReference type="HAMAP" id="MF_01369_B">
    <property type="entry name" value="Ribosomal_uL23_B"/>
    <property type="match status" value="1"/>
</dbReference>
<dbReference type="InterPro" id="IPR012677">
    <property type="entry name" value="Nucleotide-bd_a/b_plait_sf"/>
</dbReference>
<dbReference type="InterPro" id="IPR013025">
    <property type="entry name" value="Ribosomal_uL23-like"/>
</dbReference>
<dbReference type="InterPro" id="IPR012678">
    <property type="entry name" value="Ribosomal_uL23/eL15/eS24_sf"/>
</dbReference>
<dbReference type="InterPro" id="IPR001014">
    <property type="entry name" value="Ribosomal_uL23_CS"/>
</dbReference>
<dbReference type="NCBIfam" id="NF004363">
    <property type="entry name" value="PRK05738.2-4"/>
    <property type="match status" value="1"/>
</dbReference>
<dbReference type="PANTHER" id="PTHR11620">
    <property type="entry name" value="60S RIBOSOMAL PROTEIN L23A"/>
    <property type="match status" value="1"/>
</dbReference>
<dbReference type="Pfam" id="PF00276">
    <property type="entry name" value="Ribosomal_L23"/>
    <property type="match status" value="1"/>
</dbReference>
<dbReference type="SUPFAM" id="SSF54189">
    <property type="entry name" value="Ribosomal proteins S24e, L23 and L15e"/>
    <property type="match status" value="1"/>
</dbReference>
<dbReference type="PROSITE" id="PS00050">
    <property type="entry name" value="RIBOSOMAL_L23"/>
    <property type="match status" value="1"/>
</dbReference>